<feature type="chain" id="PRO_0000167107" description="Cysteine synthase B">
    <location>
        <begin position="1"/>
        <end position="299"/>
    </location>
</feature>
<feature type="binding site" evidence="1">
    <location>
        <position position="70"/>
    </location>
    <ligand>
        <name>pyridoxal 5'-phosphate</name>
        <dbReference type="ChEBI" id="CHEBI:597326"/>
    </ligand>
</feature>
<feature type="binding site" evidence="1">
    <location>
        <begin position="174"/>
        <end position="178"/>
    </location>
    <ligand>
        <name>pyridoxal 5'-phosphate</name>
        <dbReference type="ChEBI" id="CHEBI:597326"/>
    </ligand>
</feature>
<feature type="binding site" evidence="1">
    <location>
        <position position="261"/>
    </location>
    <ligand>
        <name>pyridoxal 5'-phosphate</name>
        <dbReference type="ChEBI" id="CHEBI:597326"/>
    </ligand>
</feature>
<feature type="modified residue" description="N6-(pyridoxal phosphate)lysine" evidence="1">
    <location>
        <position position="40"/>
    </location>
</feature>
<feature type="sequence conflict" description="In Ref. 1; AAC44853." evidence="2" ref="1">
    <original>I</original>
    <variation>V</variation>
    <location>
        <position position="87"/>
    </location>
</feature>
<feature type="sequence conflict" description="In Ref. 1; AAC44853." evidence="2" ref="1">
    <original>R</original>
    <variation>K</variation>
    <location>
        <position position="99"/>
    </location>
</feature>
<feature type="sequence conflict" description="In Ref. 1; AAC44853." evidence="2" ref="1">
    <original>E</original>
    <variation>Q</variation>
    <location>
        <position position="235"/>
    </location>
</feature>
<feature type="sequence conflict" description="In Ref. 1; AAC44853." evidence="2" ref="1">
    <original>S</original>
    <variation>I</variation>
    <location>
        <position position="254"/>
    </location>
</feature>
<name>CYSM_CAMJE</name>
<accession>P71128</accession>
<accession>Q0P9Y7</accession>
<accession>Q9PP20</accession>
<keyword id="KW-0028">Amino-acid biosynthesis</keyword>
<keyword id="KW-0198">Cysteine biosynthesis</keyword>
<keyword id="KW-0663">Pyridoxal phosphate</keyword>
<keyword id="KW-1185">Reference proteome</keyword>
<keyword id="KW-0808">Transferase</keyword>
<evidence type="ECO:0000250" key="1"/>
<evidence type="ECO:0000305" key="2"/>
<organism>
    <name type="scientific">Campylobacter jejuni subsp. jejuni serotype O:2 (strain ATCC 700819 / NCTC 11168)</name>
    <dbReference type="NCBI Taxonomy" id="192222"/>
    <lineage>
        <taxon>Bacteria</taxon>
        <taxon>Pseudomonadati</taxon>
        <taxon>Campylobacterota</taxon>
        <taxon>Epsilonproteobacteria</taxon>
        <taxon>Campylobacterales</taxon>
        <taxon>Campylobacteraceae</taxon>
        <taxon>Campylobacter</taxon>
    </lineage>
</organism>
<sequence length="299" mass="32385">MKVHEKVSELIGNTPIIHLKKFGINVFAKCEFLNPSHSIKDRAAFEMIKDALDSKKINQDTTIVEATSGNTGISLAMICADLGLKFIAVMPESMSLERRKMITLFGARLELTPANLGMKGAVDKANEILLNTPNSFMVSQFENISNKNAHRKNTALEILRDLDNELDIFVAGFGTGGTISGVGEILKEKLEKVHIVGVEPLNSPLLSKGEAGSHKIQGIGANFIPAILNKEVIDEVITVSNEDAINTAKELAKSGLMVGISSGANVFAASMLAKKFPDKRILTMLNDTAERYLSTDLFA</sequence>
<dbReference type="EC" id="2.5.1.47"/>
<dbReference type="EMBL" id="U63157">
    <property type="protein sequence ID" value="AAC44853.1"/>
    <property type="molecule type" value="Genomic_DNA"/>
</dbReference>
<dbReference type="EMBL" id="AL111168">
    <property type="protein sequence ID" value="CAL35032.1"/>
    <property type="molecule type" value="Genomic_DNA"/>
</dbReference>
<dbReference type="PIR" id="G81364">
    <property type="entry name" value="G81364"/>
</dbReference>
<dbReference type="PIR" id="JC6185">
    <property type="entry name" value="JC6185"/>
</dbReference>
<dbReference type="RefSeq" id="WP_002858759.1">
    <property type="nucleotide sequence ID" value="NZ_SZUC01000001.1"/>
</dbReference>
<dbReference type="RefSeq" id="YP_002344310.1">
    <property type="nucleotide sequence ID" value="NC_002163.1"/>
</dbReference>
<dbReference type="SMR" id="P71128"/>
<dbReference type="STRING" id="192222.Cj0912c"/>
<dbReference type="PaxDb" id="192222-Cj0912c"/>
<dbReference type="EnsemblBacteria" id="CAL35032">
    <property type="protein sequence ID" value="CAL35032"/>
    <property type="gene ID" value="Cj0912c"/>
</dbReference>
<dbReference type="GeneID" id="906009"/>
<dbReference type="KEGG" id="cje:Cj0912c"/>
<dbReference type="PATRIC" id="fig|192222.6.peg.896"/>
<dbReference type="eggNOG" id="COG0031">
    <property type="taxonomic scope" value="Bacteria"/>
</dbReference>
<dbReference type="HOGENOM" id="CLU_021018_1_0_7"/>
<dbReference type="OrthoDB" id="9805733at2"/>
<dbReference type="UniPathway" id="UPA00136">
    <property type="reaction ID" value="UER00200"/>
</dbReference>
<dbReference type="Proteomes" id="UP000000799">
    <property type="component" value="Chromosome"/>
</dbReference>
<dbReference type="GO" id="GO:0004124">
    <property type="term" value="F:cysteine synthase activity"/>
    <property type="evidence" value="ECO:0007669"/>
    <property type="project" value="UniProtKB-EC"/>
</dbReference>
<dbReference type="GO" id="GO:0030170">
    <property type="term" value="F:pyridoxal phosphate binding"/>
    <property type="evidence" value="ECO:0007669"/>
    <property type="project" value="InterPro"/>
</dbReference>
<dbReference type="GO" id="GO:0006535">
    <property type="term" value="P:cysteine biosynthetic process from serine"/>
    <property type="evidence" value="ECO:0007669"/>
    <property type="project" value="InterPro"/>
</dbReference>
<dbReference type="CDD" id="cd01561">
    <property type="entry name" value="CBS_like"/>
    <property type="match status" value="1"/>
</dbReference>
<dbReference type="FunFam" id="3.40.50.1100:FF:000006">
    <property type="entry name" value="Cysteine synthase"/>
    <property type="match status" value="1"/>
</dbReference>
<dbReference type="Gene3D" id="3.40.50.1100">
    <property type="match status" value="2"/>
</dbReference>
<dbReference type="InterPro" id="IPR005856">
    <property type="entry name" value="Cys_synth"/>
</dbReference>
<dbReference type="InterPro" id="IPR050214">
    <property type="entry name" value="Cys_Synth/Cystath_Beta-Synth"/>
</dbReference>
<dbReference type="InterPro" id="IPR005859">
    <property type="entry name" value="CysK"/>
</dbReference>
<dbReference type="InterPro" id="IPR001216">
    <property type="entry name" value="P-phosphate_BS"/>
</dbReference>
<dbReference type="InterPro" id="IPR000634">
    <property type="entry name" value="Ser/Thr_deHydtase_PyrdxlP-BS"/>
</dbReference>
<dbReference type="InterPro" id="IPR001926">
    <property type="entry name" value="TrpB-like_PALP"/>
</dbReference>
<dbReference type="InterPro" id="IPR036052">
    <property type="entry name" value="TrpB-like_PALP_sf"/>
</dbReference>
<dbReference type="NCBIfam" id="TIGR01139">
    <property type="entry name" value="cysK"/>
    <property type="match status" value="1"/>
</dbReference>
<dbReference type="NCBIfam" id="TIGR01136">
    <property type="entry name" value="cysKM"/>
    <property type="match status" value="1"/>
</dbReference>
<dbReference type="PANTHER" id="PTHR10314">
    <property type="entry name" value="CYSTATHIONINE BETA-SYNTHASE"/>
    <property type="match status" value="1"/>
</dbReference>
<dbReference type="Pfam" id="PF00291">
    <property type="entry name" value="PALP"/>
    <property type="match status" value="1"/>
</dbReference>
<dbReference type="SUPFAM" id="SSF53686">
    <property type="entry name" value="Tryptophan synthase beta subunit-like PLP-dependent enzymes"/>
    <property type="match status" value="1"/>
</dbReference>
<dbReference type="PROSITE" id="PS00901">
    <property type="entry name" value="CYS_SYNTHASE"/>
    <property type="match status" value="1"/>
</dbReference>
<proteinExistence type="inferred from homology"/>
<protein>
    <recommendedName>
        <fullName>Cysteine synthase B</fullName>
        <shortName>CSase B</shortName>
        <ecNumber>2.5.1.47</ecNumber>
    </recommendedName>
    <alternativeName>
        <fullName>O-acetylserine (thiol)-lyase B</fullName>
        <shortName>OAS-TL B</shortName>
    </alternativeName>
    <alternativeName>
        <fullName>O-acetylserine sulfhydrylase B</fullName>
    </alternativeName>
</protein>
<reference key="1">
    <citation type="journal article" date="1997" name="Gene">
        <title>Identification of a functional homolog of the Escherichia coli and Salmonella typhimurium cysM gene encoding O-acetylserine sulfhydrylase B in Campylobacter jejuni.</title>
        <authorList>
            <person name="Garvis S.G."/>
            <person name="Tipton S.L."/>
            <person name="Konkel M.E."/>
        </authorList>
    </citation>
    <scope>NUCLEOTIDE SEQUENCE [GENOMIC DNA]</scope>
    <source>
        <strain>F38011</strain>
    </source>
</reference>
<reference key="2">
    <citation type="journal article" date="2000" name="Nature">
        <title>The genome sequence of the food-borne pathogen Campylobacter jejuni reveals hypervariable sequences.</title>
        <authorList>
            <person name="Parkhill J."/>
            <person name="Wren B.W."/>
            <person name="Mungall K.L."/>
            <person name="Ketley J.M."/>
            <person name="Churcher C.M."/>
            <person name="Basham D."/>
            <person name="Chillingworth T."/>
            <person name="Davies R.M."/>
            <person name="Feltwell T."/>
            <person name="Holroyd S."/>
            <person name="Jagels K."/>
            <person name="Karlyshev A.V."/>
            <person name="Moule S."/>
            <person name="Pallen M.J."/>
            <person name="Penn C.W."/>
            <person name="Quail M.A."/>
            <person name="Rajandream M.A."/>
            <person name="Rutherford K.M."/>
            <person name="van Vliet A.H.M."/>
            <person name="Whitehead S."/>
            <person name="Barrell B.G."/>
        </authorList>
    </citation>
    <scope>NUCLEOTIDE SEQUENCE [LARGE SCALE GENOMIC DNA]</scope>
    <source>
        <strain>ATCC 700819 / NCTC 11168</strain>
    </source>
</reference>
<comment type="catalytic activity">
    <reaction>
        <text>O-acetyl-L-serine + hydrogen sulfide = L-cysteine + acetate</text>
        <dbReference type="Rhea" id="RHEA:14829"/>
        <dbReference type="ChEBI" id="CHEBI:29919"/>
        <dbReference type="ChEBI" id="CHEBI:30089"/>
        <dbReference type="ChEBI" id="CHEBI:35235"/>
        <dbReference type="ChEBI" id="CHEBI:58340"/>
        <dbReference type="EC" id="2.5.1.47"/>
    </reaction>
</comment>
<comment type="cofactor">
    <cofactor>
        <name>pyridoxal 5'-phosphate</name>
        <dbReference type="ChEBI" id="CHEBI:597326"/>
    </cofactor>
</comment>
<comment type="pathway">
    <text>Amino-acid biosynthesis; L-cysteine biosynthesis; L-cysteine from L-serine: step 2/2.</text>
</comment>
<comment type="similarity">
    <text evidence="2">Belongs to the cysteine synthase/cystathionine beta-synthase family.</text>
</comment>
<gene>
    <name type="primary">cysM</name>
    <name type="ordered locus">Cj0912c</name>
</gene>